<evidence type="ECO:0000250" key="1"/>
<evidence type="ECO:0000256" key="2">
    <source>
        <dbReference type="SAM" id="MobiDB-lite"/>
    </source>
</evidence>
<evidence type="ECO:0000305" key="3"/>
<sequence length="197" mass="21606">MATSSLSTIVFSPLALSNSSSFPNKPQVSNLSLHSSLSNLRRTLSHSSPSSSSSSNVRVFAAPEVLESQETGPESYVEEGSETSALGIGADSDQMAPKQKIRIKLRSYWVPLIEDSCKQIMDAARTTNAKTMGPVPLPTKKRIFCVLKSPHVHKDARFHFEIRTHQRLIDILYPTAQTIDSLMQLDLPAGVDVEVKL</sequence>
<proteinExistence type="evidence at transcript level"/>
<keyword id="KW-0150">Chloroplast</keyword>
<keyword id="KW-0934">Plastid</keyword>
<keyword id="KW-0687">Ribonucleoprotein</keyword>
<keyword id="KW-0689">Ribosomal protein</keyword>
<keyword id="KW-0809">Transit peptide</keyword>
<accession>Q9M4Y3</accession>
<feature type="transit peptide" description="Chloroplast" evidence="1">
    <location>
        <begin position="1"/>
        <end position="60"/>
    </location>
</feature>
<feature type="chain" id="PRO_0000249416" description="Small ribosomal subunit protein uS10c">
    <location>
        <begin position="61"/>
        <end position="197"/>
    </location>
</feature>
<feature type="region of interest" description="Disordered" evidence="2">
    <location>
        <begin position="67"/>
        <end position="91"/>
    </location>
</feature>
<comment type="subunit">
    <text evidence="1">Part of the 30S ribosomal subunit.</text>
</comment>
<comment type="subcellular location">
    <subcellularLocation>
        <location evidence="1">Plastid</location>
        <location evidence="1">Chloroplast</location>
    </subcellularLocation>
</comment>
<comment type="similarity">
    <text evidence="3">Belongs to the universal ribosomal protein uS10 family.</text>
</comment>
<organism>
    <name type="scientific">Mesembryanthemum crystallinum</name>
    <name type="common">Common ice plant</name>
    <name type="synonym">Cryophytum crystallinum</name>
    <dbReference type="NCBI Taxonomy" id="3544"/>
    <lineage>
        <taxon>Eukaryota</taxon>
        <taxon>Viridiplantae</taxon>
        <taxon>Streptophyta</taxon>
        <taxon>Embryophyta</taxon>
        <taxon>Tracheophyta</taxon>
        <taxon>Spermatophyta</taxon>
        <taxon>Magnoliopsida</taxon>
        <taxon>eudicotyledons</taxon>
        <taxon>Gunneridae</taxon>
        <taxon>Pentapetalae</taxon>
        <taxon>Caryophyllales</taxon>
        <taxon>Aizoaceae</taxon>
        <taxon>Mesembryanthemum</taxon>
        <taxon>Mesembryanthemum subgen. Cryophytum</taxon>
    </lineage>
</organism>
<dbReference type="EMBL" id="AF245665">
    <property type="protein sequence ID" value="AAF64190.1"/>
    <property type="molecule type" value="mRNA"/>
</dbReference>
<dbReference type="SMR" id="Q9M4Y3"/>
<dbReference type="GO" id="GO:0009507">
    <property type="term" value="C:chloroplast"/>
    <property type="evidence" value="ECO:0007669"/>
    <property type="project" value="UniProtKB-SubCell"/>
</dbReference>
<dbReference type="GO" id="GO:1990904">
    <property type="term" value="C:ribonucleoprotein complex"/>
    <property type="evidence" value="ECO:0007669"/>
    <property type="project" value="UniProtKB-KW"/>
</dbReference>
<dbReference type="GO" id="GO:0005840">
    <property type="term" value="C:ribosome"/>
    <property type="evidence" value="ECO:0007669"/>
    <property type="project" value="UniProtKB-KW"/>
</dbReference>
<dbReference type="GO" id="GO:0003723">
    <property type="term" value="F:RNA binding"/>
    <property type="evidence" value="ECO:0007669"/>
    <property type="project" value="InterPro"/>
</dbReference>
<dbReference type="GO" id="GO:0003735">
    <property type="term" value="F:structural constituent of ribosome"/>
    <property type="evidence" value="ECO:0007669"/>
    <property type="project" value="InterPro"/>
</dbReference>
<dbReference type="GO" id="GO:0006412">
    <property type="term" value="P:translation"/>
    <property type="evidence" value="ECO:0007669"/>
    <property type="project" value="InterPro"/>
</dbReference>
<dbReference type="FunFam" id="3.30.70.600:FF:000001">
    <property type="entry name" value="30S ribosomal protein S10"/>
    <property type="match status" value="1"/>
</dbReference>
<dbReference type="Gene3D" id="3.30.70.600">
    <property type="entry name" value="Ribosomal protein S10 domain"/>
    <property type="match status" value="1"/>
</dbReference>
<dbReference type="HAMAP" id="MF_00508">
    <property type="entry name" value="Ribosomal_uS10"/>
    <property type="match status" value="1"/>
</dbReference>
<dbReference type="InterPro" id="IPR001848">
    <property type="entry name" value="Ribosomal_uS10"/>
</dbReference>
<dbReference type="InterPro" id="IPR018268">
    <property type="entry name" value="Ribosomal_uS10_CS"/>
</dbReference>
<dbReference type="InterPro" id="IPR027486">
    <property type="entry name" value="Ribosomal_uS10_dom"/>
</dbReference>
<dbReference type="InterPro" id="IPR036838">
    <property type="entry name" value="Ribosomal_uS10_dom_sf"/>
</dbReference>
<dbReference type="NCBIfam" id="NF001861">
    <property type="entry name" value="PRK00596.1"/>
    <property type="match status" value="1"/>
</dbReference>
<dbReference type="NCBIfam" id="TIGR01049">
    <property type="entry name" value="rpsJ_bact"/>
    <property type="match status" value="1"/>
</dbReference>
<dbReference type="PANTHER" id="PTHR11700">
    <property type="entry name" value="30S RIBOSOMAL PROTEIN S10 FAMILY MEMBER"/>
    <property type="match status" value="1"/>
</dbReference>
<dbReference type="Pfam" id="PF00338">
    <property type="entry name" value="Ribosomal_S10"/>
    <property type="match status" value="1"/>
</dbReference>
<dbReference type="PRINTS" id="PR00971">
    <property type="entry name" value="RIBOSOMALS10"/>
</dbReference>
<dbReference type="SMART" id="SM01403">
    <property type="entry name" value="Ribosomal_S10"/>
    <property type="match status" value="1"/>
</dbReference>
<dbReference type="SUPFAM" id="SSF54999">
    <property type="entry name" value="Ribosomal protein S10"/>
    <property type="match status" value="1"/>
</dbReference>
<dbReference type="PROSITE" id="PS00361">
    <property type="entry name" value="RIBOSOMAL_S10"/>
    <property type="match status" value="1"/>
</dbReference>
<reference key="1">
    <citation type="journal article" date="2000" name="J. Biol. Chem.">
        <title>The plastid ribosomal proteins. Identification of all the proteins in the 30S subunit of an organelle ribosome (chloroplast).</title>
        <authorList>
            <person name="Yamaguchi K."/>
            <person name="von Knoblauch K."/>
            <person name="Subramanian A.R."/>
        </authorList>
    </citation>
    <scope>NUCLEOTIDE SEQUENCE [MRNA]</scope>
</reference>
<gene>
    <name type="primary">RPS10</name>
</gene>
<name>RR10_MESCR</name>
<protein>
    <recommendedName>
        <fullName evidence="3">Small ribosomal subunit protein uS10c</fullName>
    </recommendedName>
    <alternativeName>
        <fullName>30S ribosomal protein S10, chloroplastic</fullName>
    </alternativeName>
</protein>